<reference key="1">
    <citation type="journal article" date="2006" name="Genome Biol.">
        <title>Genomic analysis reveals that Pseudomonas aeruginosa virulence is combinatorial.</title>
        <authorList>
            <person name="Lee D.G."/>
            <person name="Urbach J.M."/>
            <person name="Wu G."/>
            <person name="Liberati N.T."/>
            <person name="Feinbaum R.L."/>
            <person name="Miyata S."/>
            <person name="Diggins L.T."/>
            <person name="He J."/>
            <person name="Saucier M."/>
            <person name="Deziel E."/>
            <person name="Friedman L."/>
            <person name="Li L."/>
            <person name="Grills G."/>
            <person name="Montgomery K."/>
            <person name="Kucherlapati R."/>
            <person name="Rahme L.G."/>
            <person name="Ausubel F.M."/>
        </authorList>
    </citation>
    <scope>NUCLEOTIDE SEQUENCE [LARGE SCALE GENOMIC DNA]</scope>
    <source>
        <strain>UCBPP-PA14</strain>
    </source>
</reference>
<gene>
    <name evidence="1" type="primary">pyrD</name>
    <name type="ordered locus">PA14_24640</name>
</gene>
<proteinExistence type="inferred from homology"/>
<name>PYRD_PSEAB</name>
<protein>
    <recommendedName>
        <fullName evidence="1">Dihydroorotate dehydrogenase (quinone)</fullName>
        <ecNumber evidence="1">1.3.5.2</ecNumber>
    </recommendedName>
    <alternativeName>
        <fullName evidence="1">DHOdehase</fullName>
        <shortName evidence="1">DHOD</shortName>
        <shortName evidence="1">DHODase</shortName>
    </alternativeName>
    <alternativeName>
        <fullName evidence="1">Dihydroorotate oxidase</fullName>
    </alternativeName>
</protein>
<accession>Q02PL5</accession>
<keyword id="KW-1003">Cell membrane</keyword>
<keyword id="KW-0285">Flavoprotein</keyword>
<keyword id="KW-0288">FMN</keyword>
<keyword id="KW-0472">Membrane</keyword>
<keyword id="KW-0560">Oxidoreductase</keyword>
<keyword id="KW-0665">Pyrimidine biosynthesis</keyword>
<comment type="function">
    <text evidence="1">Catalyzes the conversion of dihydroorotate to orotate with quinone as electron acceptor.</text>
</comment>
<comment type="catalytic activity">
    <reaction evidence="1">
        <text>(S)-dihydroorotate + a quinone = orotate + a quinol</text>
        <dbReference type="Rhea" id="RHEA:30187"/>
        <dbReference type="ChEBI" id="CHEBI:24646"/>
        <dbReference type="ChEBI" id="CHEBI:30839"/>
        <dbReference type="ChEBI" id="CHEBI:30864"/>
        <dbReference type="ChEBI" id="CHEBI:132124"/>
        <dbReference type="EC" id="1.3.5.2"/>
    </reaction>
</comment>
<comment type="cofactor">
    <cofactor evidence="1">
        <name>FMN</name>
        <dbReference type="ChEBI" id="CHEBI:58210"/>
    </cofactor>
    <text evidence="1">Binds 1 FMN per subunit.</text>
</comment>
<comment type="pathway">
    <text evidence="1">Pyrimidine metabolism; UMP biosynthesis via de novo pathway; orotate from (S)-dihydroorotate (quinone route): step 1/1.</text>
</comment>
<comment type="subunit">
    <text evidence="1">Monomer.</text>
</comment>
<comment type="subcellular location">
    <subcellularLocation>
        <location evidence="1">Cell membrane</location>
        <topology evidence="1">Peripheral membrane protein</topology>
    </subcellularLocation>
</comment>
<comment type="similarity">
    <text evidence="1">Belongs to the dihydroorotate dehydrogenase family. Type 2 subfamily.</text>
</comment>
<organism>
    <name type="scientific">Pseudomonas aeruginosa (strain UCBPP-PA14)</name>
    <dbReference type="NCBI Taxonomy" id="208963"/>
    <lineage>
        <taxon>Bacteria</taxon>
        <taxon>Pseudomonadati</taxon>
        <taxon>Pseudomonadota</taxon>
        <taxon>Gammaproteobacteria</taxon>
        <taxon>Pseudomonadales</taxon>
        <taxon>Pseudomonadaceae</taxon>
        <taxon>Pseudomonas</taxon>
    </lineage>
</organism>
<dbReference type="EC" id="1.3.5.2" evidence="1"/>
<dbReference type="EMBL" id="CP000438">
    <property type="protein sequence ID" value="ABJ12286.1"/>
    <property type="molecule type" value="Genomic_DNA"/>
</dbReference>
<dbReference type="RefSeq" id="WP_003138558.1">
    <property type="nucleotide sequence ID" value="NZ_CP034244.1"/>
</dbReference>
<dbReference type="SMR" id="Q02PL5"/>
<dbReference type="KEGG" id="pau:PA14_24640"/>
<dbReference type="PseudoCAP" id="PA14_24640"/>
<dbReference type="HOGENOM" id="CLU_013640_2_0_6"/>
<dbReference type="BioCyc" id="PAER208963:G1G74-2054-MONOMER"/>
<dbReference type="UniPathway" id="UPA00070">
    <property type="reaction ID" value="UER00946"/>
</dbReference>
<dbReference type="Proteomes" id="UP000000653">
    <property type="component" value="Chromosome"/>
</dbReference>
<dbReference type="GO" id="GO:0005737">
    <property type="term" value="C:cytoplasm"/>
    <property type="evidence" value="ECO:0007669"/>
    <property type="project" value="InterPro"/>
</dbReference>
<dbReference type="GO" id="GO:0005886">
    <property type="term" value="C:plasma membrane"/>
    <property type="evidence" value="ECO:0007669"/>
    <property type="project" value="UniProtKB-SubCell"/>
</dbReference>
<dbReference type="GO" id="GO:0106430">
    <property type="term" value="F:dihydroorotate dehydrogenase (quinone) activity"/>
    <property type="evidence" value="ECO:0007669"/>
    <property type="project" value="UniProtKB-EC"/>
</dbReference>
<dbReference type="GO" id="GO:0006207">
    <property type="term" value="P:'de novo' pyrimidine nucleobase biosynthetic process"/>
    <property type="evidence" value="ECO:0007669"/>
    <property type="project" value="InterPro"/>
</dbReference>
<dbReference type="GO" id="GO:0044205">
    <property type="term" value="P:'de novo' UMP biosynthetic process"/>
    <property type="evidence" value="ECO:0007669"/>
    <property type="project" value="UniProtKB-UniRule"/>
</dbReference>
<dbReference type="CDD" id="cd04738">
    <property type="entry name" value="DHOD_2_like"/>
    <property type="match status" value="1"/>
</dbReference>
<dbReference type="FunFam" id="3.20.20.70:FF:000028">
    <property type="entry name" value="Dihydroorotate dehydrogenase (quinone)"/>
    <property type="match status" value="1"/>
</dbReference>
<dbReference type="Gene3D" id="3.20.20.70">
    <property type="entry name" value="Aldolase class I"/>
    <property type="match status" value="1"/>
</dbReference>
<dbReference type="HAMAP" id="MF_00225">
    <property type="entry name" value="DHO_dh_type2"/>
    <property type="match status" value="1"/>
</dbReference>
<dbReference type="InterPro" id="IPR013785">
    <property type="entry name" value="Aldolase_TIM"/>
</dbReference>
<dbReference type="InterPro" id="IPR050074">
    <property type="entry name" value="DHO_dehydrogenase"/>
</dbReference>
<dbReference type="InterPro" id="IPR012135">
    <property type="entry name" value="Dihydroorotate_DH_1_2"/>
</dbReference>
<dbReference type="InterPro" id="IPR005719">
    <property type="entry name" value="Dihydroorotate_DH_2"/>
</dbReference>
<dbReference type="InterPro" id="IPR005720">
    <property type="entry name" value="Dihydroorotate_DH_cat"/>
</dbReference>
<dbReference type="InterPro" id="IPR001295">
    <property type="entry name" value="Dihydroorotate_DH_CS"/>
</dbReference>
<dbReference type="NCBIfam" id="NF003644">
    <property type="entry name" value="PRK05286.1-1"/>
    <property type="match status" value="1"/>
</dbReference>
<dbReference type="NCBIfam" id="NF003645">
    <property type="entry name" value="PRK05286.1-2"/>
    <property type="match status" value="1"/>
</dbReference>
<dbReference type="NCBIfam" id="NF003646">
    <property type="entry name" value="PRK05286.1-4"/>
    <property type="match status" value="1"/>
</dbReference>
<dbReference type="NCBIfam" id="NF003652">
    <property type="entry name" value="PRK05286.2-5"/>
    <property type="match status" value="1"/>
</dbReference>
<dbReference type="NCBIfam" id="TIGR01036">
    <property type="entry name" value="pyrD_sub2"/>
    <property type="match status" value="1"/>
</dbReference>
<dbReference type="PANTHER" id="PTHR48109:SF4">
    <property type="entry name" value="DIHYDROOROTATE DEHYDROGENASE (QUINONE), MITOCHONDRIAL"/>
    <property type="match status" value="1"/>
</dbReference>
<dbReference type="PANTHER" id="PTHR48109">
    <property type="entry name" value="DIHYDROOROTATE DEHYDROGENASE (QUINONE), MITOCHONDRIAL-RELATED"/>
    <property type="match status" value="1"/>
</dbReference>
<dbReference type="Pfam" id="PF01180">
    <property type="entry name" value="DHO_dh"/>
    <property type="match status" value="1"/>
</dbReference>
<dbReference type="PIRSF" id="PIRSF000164">
    <property type="entry name" value="DHO_oxidase"/>
    <property type="match status" value="1"/>
</dbReference>
<dbReference type="SUPFAM" id="SSF51395">
    <property type="entry name" value="FMN-linked oxidoreductases"/>
    <property type="match status" value="1"/>
</dbReference>
<dbReference type="PROSITE" id="PS00911">
    <property type="entry name" value="DHODEHASE_1"/>
    <property type="match status" value="1"/>
</dbReference>
<sequence>MYTLARQLLFKLSPETSHELSIDLIGAGGRLGLNRLLTPEPASLPVSVLGLEFPNPVGLAAGLDKNGDAIDGFGQLGFGFIEIGTVTPRPQPGNPKPRLFRLPQANAIINRMGFNNHGVDHLLARVRAAKYRGVLGINIGKNFDTPVERAVDDYLICLDKVYADASYVTVNVSSPNTPGLRSLQFGDSLKQLLEALRQRQEALALRHGRRVPLAIKIAPDMTDEETALVAAALVEAGMDAVIATNTTLGREGVEGLPHGDEAGGLSGAPVREKSTHTVKVLAGELGGRLPIIAAGGITEGAHAAEKIAAGASLVQIYSGFIYKGPALIREAVDAIAALPRRN</sequence>
<evidence type="ECO:0000255" key="1">
    <source>
        <dbReference type="HAMAP-Rule" id="MF_00225"/>
    </source>
</evidence>
<feature type="chain" id="PRO_1000024199" description="Dihydroorotate dehydrogenase (quinone)">
    <location>
        <begin position="1"/>
        <end position="342"/>
    </location>
</feature>
<feature type="active site" description="Nucleophile" evidence="1">
    <location>
        <position position="174"/>
    </location>
</feature>
<feature type="binding site" evidence="1">
    <location>
        <begin position="61"/>
        <end position="65"/>
    </location>
    <ligand>
        <name>FMN</name>
        <dbReference type="ChEBI" id="CHEBI:58210"/>
    </ligand>
</feature>
<feature type="binding site" evidence="1">
    <location>
        <position position="65"/>
    </location>
    <ligand>
        <name>substrate</name>
    </ligand>
</feature>
<feature type="binding site" evidence="1">
    <location>
        <position position="85"/>
    </location>
    <ligand>
        <name>FMN</name>
        <dbReference type="ChEBI" id="CHEBI:58210"/>
    </ligand>
</feature>
<feature type="binding site" evidence="1">
    <location>
        <begin position="110"/>
        <end position="114"/>
    </location>
    <ligand>
        <name>substrate</name>
    </ligand>
</feature>
<feature type="binding site" evidence="1">
    <location>
        <position position="138"/>
    </location>
    <ligand>
        <name>FMN</name>
        <dbReference type="ChEBI" id="CHEBI:58210"/>
    </ligand>
</feature>
<feature type="binding site" evidence="1">
    <location>
        <position position="171"/>
    </location>
    <ligand>
        <name>FMN</name>
        <dbReference type="ChEBI" id="CHEBI:58210"/>
    </ligand>
</feature>
<feature type="binding site" evidence="1">
    <location>
        <position position="171"/>
    </location>
    <ligand>
        <name>substrate</name>
    </ligand>
</feature>
<feature type="binding site" evidence="1">
    <location>
        <position position="176"/>
    </location>
    <ligand>
        <name>substrate</name>
    </ligand>
</feature>
<feature type="binding site" evidence="1">
    <location>
        <position position="216"/>
    </location>
    <ligand>
        <name>FMN</name>
        <dbReference type="ChEBI" id="CHEBI:58210"/>
    </ligand>
</feature>
<feature type="binding site" evidence="1">
    <location>
        <position position="244"/>
    </location>
    <ligand>
        <name>FMN</name>
        <dbReference type="ChEBI" id="CHEBI:58210"/>
    </ligand>
</feature>
<feature type="binding site" evidence="1">
    <location>
        <begin position="245"/>
        <end position="246"/>
    </location>
    <ligand>
        <name>substrate</name>
    </ligand>
</feature>
<feature type="binding site" evidence="1">
    <location>
        <position position="267"/>
    </location>
    <ligand>
        <name>FMN</name>
        <dbReference type="ChEBI" id="CHEBI:58210"/>
    </ligand>
</feature>
<feature type="binding site" evidence="1">
    <location>
        <position position="296"/>
    </location>
    <ligand>
        <name>FMN</name>
        <dbReference type="ChEBI" id="CHEBI:58210"/>
    </ligand>
</feature>
<feature type="binding site" evidence="1">
    <location>
        <begin position="317"/>
        <end position="318"/>
    </location>
    <ligand>
        <name>FMN</name>
        <dbReference type="ChEBI" id="CHEBI:58210"/>
    </ligand>
</feature>